<name>ADDB_STAAW</name>
<accession>Q8NXF0</accession>
<proteinExistence type="inferred from homology"/>
<comment type="function">
    <text evidence="1">The heterodimer acts as both an ATP-dependent DNA helicase and an ATP-dependent, dual-direction single-stranded exonuclease. Recognizes the chi site generating a DNA molecule suitable for the initiation of homologous recombination. The AddB subunit has 5' -&gt; 3' nuclease activity but not helicase activity.</text>
</comment>
<comment type="cofactor">
    <cofactor evidence="1">
        <name>Mg(2+)</name>
        <dbReference type="ChEBI" id="CHEBI:18420"/>
    </cofactor>
</comment>
<comment type="cofactor">
    <cofactor evidence="1">
        <name>[4Fe-4S] cluster</name>
        <dbReference type="ChEBI" id="CHEBI:49883"/>
    </cofactor>
    <text evidence="1">Binds 1 [4Fe-4S] cluster.</text>
</comment>
<comment type="subunit">
    <text evidence="1">Heterodimer of AddA and AddB.</text>
</comment>
<comment type="miscellaneous">
    <text evidence="1">Despite having conserved helicase domains, this subunit does not have helicase activity.</text>
</comment>
<comment type="similarity">
    <text evidence="1">Belongs to the helicase family. AddB/RexB type 1 subfamily.</text>
</comment>
<keyword id="KW-0004">4Fe-4S</keyword>
<keyword id="KW-0067">ATP-binding</keyword>
<keyword id="KW-0227">DNA damage</keyword>
<keyword id="KW-0234">DNA repair</keyword>
<keyword id="KW-0238">DNA-binding</keyword>
<keyword id="KW-0269">Exonuclease</keyword>
<keyword id="KW-0347">Helicase</keyword>
<keyword id="KW-0378">Hydrolase</keyword>
<keyword id="KW-0408">Iron</keyword>
<keyword id="KW-0411">Iron-sulfur</keyword>
<keyword id="KW-0479">Metal-binding</keyword>
<keyword id="KW-0540">Nuclease</keyword>
<keyword id="KW-0547">Nucleotide-binding</keyword>
<organism>
    <name type="scientific">Staphylococcus aureus (strain MW2)</name>
    <dbReference type="NCBI Taxonomy" id="196620"/>
    <lineage>
        <taxon>Bacteria</taxon>
        <taxon>Bacillati</taxon>
        <taxon>Bacillota</taxon>
        <taxon>Bacilli</taxon>
        <taxon>Bacillales</taxon>
        <taxon>Staphylococcaceae</taxon>
        <taxon>Staphylococcus</taxon>
    </lineage>
</organism>
<dbReference type="EC" id="3.1.-.-" evidence="1"/>
<dbReference type="EMBL" id="BA000033">
    <property type="protein sequence ID" value="BAB94713.1"/>
    <property type="molecule type" value="Genomic_DNA"/>
</dbReference>
<dbReference type="RefSeq" id="WP_000172349.1">
    <property type="nucleotide sequence ID" value="NC_003923.1"/>
</dbReference>
<dbReference type="SMR" id="Q8NXF0"/>
<dbReference type="KEGG" id="sam:MW0848"/>
<dbReference type="HOGENOM" id="CLU_007838_0_0_9"/>
<dbReference type="GO" id="GO:0051539">
    <property type="term" value="F:4 iron, 4 sulfur cluster binding"/>
    <property type="evidence" value="ECO:0007669"/>
    <property type="project" value="UniProtKB-KW"/>
</dbReference>
<dbReference type="GO" id="GO:0008409">
    <property type="term" value="F:5'-3' exonuclease activity"/>
    <property type="evidence" value="ECO:0007669"/>
    <property type="project" value="UniProtKB-UniRule"/>
</dbReference>
<dbReference type="GO" id="GO:0005524">
    <property type="term" value="F:ATP binding"/>
    <property type="evidence" value="ECO:0007669"/>
    <property type="project" value="UniProtKB-UniRule"/>
</dbReference>
<dbReference type="GO" id="GO:0003690">
    <property type="term" value="F:double-stranded DNA binding"/>
    <property type="evidence" value="ECO:0007669"/>
    <property type="project" value="UniProtKB-UniRule"/>
</dbReference>
<dbReference type="GO" id="GO:0004386">
    <property type="term" value="F:helicase activity"/>
    <property type="evidence" value="ECO:0007669"/>
    <property type="project" value="UniProtKB-KW"/>
</dbReference>
<dbReference type="GO" id="GO:0046872">
    <property type="term" value="F:metal ion binding"/>
    <property type="evidence" value="ECO:0007669"/>
    <property type="project" value="UniProtKB-KW"/>
</dbReference>
<dbReference type="GO" id="GO:0000724">
    <property type="term" value="P:double-strand break repair via homologous recombination"/>
    <property type="evidence" value="ECO:0007669"/>
    <property type="project" value="UniProtKB-UniRule"/>
</dbReference>
<dbReference type="Gene3D" id="3.90.320.10">
    <property type="match status" value="1"/>
</dbReference>
<dbReference type="Gene3D" id="3.40.50.300">
    <property type="entry name" value="P-loop containing nucleotide triphosphate hydrolases"/>
    <property type="match status" value="4"/>
</dbReference>
<dbReference type="HAMAP" id="MF_01452">
    <property type="entry name" value="AddB_type1"/>
    <property type="match status" value="1"/>
</dbReference>
<dbReference type="InterPro" id="IPR049035">
    <property type="entry name" value="ADDB_N"/>
</dbReference>
<dbReference type="InterPro" id="IPR014140">
    <property type="entry name" value="DNA_helicase_suAddB"/>
</dbReference>
<dbReference type="InterPro" id="IPR014017">
    <property type="entry name" value="DNA_helicase_UvrD-like_C"/>
</dbReference>
<dbReference type="InterPro" id="IPR027417">
    <property type="entry name" value="P-loop_NTPase"/>
</dbReference>
<dbReference type="InterPro" id="IPR011604">
    <property type="entry name" value="PDDEXK-like_dom_sf"/>
</dbReference>
<dbReference type="InterPro" id="IPR038726">
    <property type="entry name" value="PDDEXK_AddAB-type"/>
</dbReference>
<dbReference type="NCBIfam" id="TIGR02773">
    <property type="entry name" value="addB_Gpos"/>
    <property type="match status" value="1"/>
</dbReference>
<dbReference type="PANTHER" id="PTHR30591">
    <property type="entry name" value="RECBCD ENZYME SUBUNIT RECC"/>
    <property type="match status" value="1"/>
</dbReference>
<dbReference type="PANTHER" id="PTHR30591:SF1">
    <property type="entry name" value="RECBCD ENZYME SUBUNIT RECC"/>
    <property type="match status" value="1"/>
</dbReference>
<dbReference type="Pfam" id="PF21445">
    <property type="entry name" value="ADDB_N"/>
    <property type="match status" value="1"/>
</dbReference>
<dbReference type="Pfam" id="PF12705">
    <property type="entry name" value="PDDEXK_1"/>
    <property type="match status" value="1"/>
</dbReference>
<dbReference type="Pfam" id="PF13361">
    <property type="entry name" value="UvrD_C"/>
    <property type="match status" value="1"/>
</dbReference>
<dbReference type="SUPFAM" id="SSF52540">
    <property type="entry name" value="P-loop containing nucleoside triphosphate hydrolases"/>
    <property type="match status" value="1"/>
</dbReference>
<dbReference type="PROSITE" id="PS51198">
    <property type="entry name" value="UVRD_HELICASE_ATP_BIND"/>
    <property type="match status" value="1"/>
</dbReference>
<dbReference type="PROSITE" id="PS51217">
    <property type="entry name" value="UVRD_HELICASE_CTER"/>
    <property type="match status" value="1"/>
</dbReference>
<evidence type="ECO:0000255" key="1">
    <source>
        <dbReference type="HAMAP-Rule" id="MF_01452"/>
    </source>
</evidence>
<sequence length="1158" mass="134630">MTLHAYLGRAGTGKSTKMLTEIKQKMKADPLGDPIILIAPTQSTFQLEQAFVNDPELNGSLRTEVLHFERLSHRIFQEVGSYSEQKLSKAATEMMIYNIVQEQQKYLKLYQSQAKYYGFSEKLTEQIQDFKKYAVTPEHLEHFIADKNMQTRTKNKLEDIALIYREFEQRIQNEFITGEDSLQYFIDCMPKSEWLKRADIYIDGFHNFSTIEYLIIKGLIKYAKSVTIILTTDGNHDQFSLFRKPSEVLRHIEEIANELNISIERQYFNQLYRFNNQDLKHLEQEFDVLQINRVACQGHINILESATMREEINEIARRIIVDIRDKQLRYQDIAILYRDESYAYLFDSILPLYNIPYNIDTKRSMTHHPVMEMIRSLIEVIQSNWQVNPMLRLLKTDVLTASYLKSAYLVDLLENFVLERGIYGKRWLDDELFNVEHFSKMGRKAHKLTEDERNTFEQVVKLKKDVIDKILHFEKQMSQAETVKDFATAFYESMEYFELPNQLMTERDELDLNGNHEKAEEIDQIWNGLIQILDDLVLVFGDEPMSMERFLEVFDIGLEQLEFVMIPQTLDQVSIGTMDLAKVDNKQHVFLVGMNDGTMPQPVTASSLITDEEKKYFEQQANVELSPTSDILQMDEAFVCYIAMTRARQDVTFSYSLMGSSGDDKEISPFLNQIQSLFNQLEITNIPQYHEVNPLSLMQHAKQTKITLFEALRAWLYDEIVADSWLDAYQVIRDSDHLNQGLDYLMSALTFDNETVKLGETLSKDLYGKEINASVSRFEGYQQCPFKHYASHGLKLNERTKYELQNFDLGDIFHSVLKYISERINGDFKQLDLKKIRQLTNEALEEILPKVQFNLLNSSAYYRYLSRRIGAIVETTLSALKYQGTYSKFMPKHFETSFRRKPRTNDELIAQTLTTTQGIPINIRGQIDRIDTYTKNDTSFVNIIDYKSSEGSATLDLTKVYYGMQMQMMTYMDIVLQNKQRLGLTDIVKPGGLLYFHVHEPRIKFKSWSDIDEDKLEQDLIKKFKLSGLVNADQTVIDALDIRLEPKFTSDIVPVGLNKDGSLSKRGSQVADEATIYKFIQHNKENFIETASNIMDGHTEVAPLKYKQKLPCAFCSYQSVCHVDGMIDSKRYRTVDETINPIEAIQNININDEFGGEQ</sequence>
<protein>
    <recommendedName>
        <fullName evidence="1">ATP-dependent helicase/deoxyribonuclease subunit B</fullName>
        <ecNumber evidence="1">3.1.-.-</ecNumber>
    </recommendedName>
    <alternativeName>
        <fullName evidence="1">ATP-dependent helicase/nuclease subunit AddB</fullName>
    </alternativeName>
</protein>
<reference key="1">
    <citation type="journal article" date="2002" name="Lancet">
        <title>Genome and virulence determinants of high virulence community-acquired MRSA.</title>
        <authorList>
            <person name="Baba T."/>
            <person name="Takeuchi F."/>
            <person name="Kuroda M."/>
            <person name="Yuzawa H."/>
            <person name="Aoki K."/>
            <person name="Oguchi A."/>
            <person name="Nagai Y."/>
            <person name="Iwama N."/>
            <person name="Asano K."/>
            <person name="Naimi T."/>
            <person name="Kuroda H."/>
            <person name="Cui L."/>
            <person name="Yamamoto K."/>
            <person name="Hiramatsu K."/>
        </authorList>
    </citation>
    <scope>NUCLEOTIDE SEQUENCE [LARGE SCALE GENOMIC DNA]</scope>
    <source>
        <strain>MW2</strain>
    </source>
</reference>
<gene>
    <name evidence="1" type="primary">addB</name>
    <name type="ordered locus">MW0848</name>
</gene>
<feature type="chain" id="PRO_0000379212" description="ATP-dependent helicase/deoxyribonuclease subunit B">
    <location>
        <begin position="1"/>
        <end position="1158"/>
    </location>
</feature>
<feature type="domain" description="UvrD-like helicase ATP-binding" evidence="1">
    <location>
        <begin position="1"/>
        <end position="275"/>
    </location>
</feature>
<feature type="domain" description="UvrD-like helicase C-terminal" evidence="1">
    <location>
        <begin position="269"/>
        <end position="583"/>
    </location>
</feature>
<feature type="binding site" evidence="1">
    <location>
        <begin position="8"/>
        <end position="15"/>
    </location>
    <ligand>
        <name>ATP</name>
        <dbReference type="ChEBI" id="CHEBI:30616"/>
    </ligand>
</feature>
<feature type="binding site" evidence="1">
    <location>
        <position position="784"/>
    </location>
    <ligand>
        <name>[4Fe-4S] cluster</name>
        <dbReference type="ChEBI" id="CHEBI:49883"/>
    </ligand>
</feature>
<feature type="binding site" evidence="1">
    <location>
        <position position="1112"/>
    </location>
    <ligand>
        <name>[4Fe-4S] cluster</name>
        <dbReference type="ChEBI" id="CHEBI:49883"/>
    </ligand>
</feature>
<feature type="binding site" evidence="1">
    <location>
        <position position="1115"/>
    </location>
    <ligand>
        <name>[4Fe-4S] cluster</name>
        <dbReference type="ChEBI" id="CHEBI:49883"/>
    </ligand>
</feature>
<feature type="binding site" evidence="1">
    <location>
        <position position="1121"/>
    </location>
    <ligand>
        <name>[4Fe-4S] cluster</name>
        <dbReference type="ChEBI" id="CHEBI:49883"/>
    </ligand>
</feature>